<evidence type="ECO:0000255" key="1">
    <source>
        <dbReference type="HAMAP-Rule" id="MF_01310"/>
    </source>
</evidence>
<evidence type="ECO:0000305" key="2"/>
<gene>
    <name evidence="1" type="primary">rps11</name>
    <name evidence="1" type="synonym">rps11Ab</name>
    <name type="ordered locus">SSO0072</name>
    <name type="ORF">C04_050</name>
</gene>
<organism>
    <name type="scientific">Saccharolobus solfataricus (strain ATCC 35092 / DSM 1617 / JCM 11322 / P2)</name>
    <name type="common">Sulfolobus solfataricus</name>
    <dbReference type="NCBI Taxonomy" id="273057"/>
    <lineage>
        <taxon>Archaea</taxon>
        <taxon>Thermoproteota</taxon>
        <taxon>Thermoprotei</taxon>
        <taxon>Sulfolobales</taxon>
        <taxon>Sulfolobaceae</taxon>
        <taxon>Saccharolobus</taxon>
    </lineage>
</organism>
<accession>P95988</accession>
<feature type="chain" id="PRO_0000123283" description="Small ribosomal subunit protein uS11">
    <location>
        <begin position="1"/>
        <end position="132"/>
    </location>
</feature>
<sequence length="132" mass="14041">MSSRREIRWGIAHIYASQNNTLLTISDLTGAEIISRASGGMVVKADREKSSPYAAMLAANKAASDALEKGIMALHIKVRAPGGYGSKTPGPGAQPAIRALARAGFIIGRIEDVTPIPHDTIRRPGGRRGRRV</sequence>
<reference key="1">
    <citation type="journal article" date="1996" name="Mol. Microbiol.">
        <title>Organizational characteristics and information content of an archaeal genome: 156 kb of sequence from Sulfolobus solfataricus P2.</title>
        <authorList>
            <person name="Sensen C.W."/>
            <person name="Klenk H.-P."/>
            <person name="Singh R.K."/>
            <person name="Allard G."/>
            <person name="Chan C.C.-Y."/>
            <person name="Liu Q.Y."/>
            <person name="Penny S.L."/>
            <person name="Young F."/>
            <person name="Schenk M.E."/>
            <person name="Gaasterland T."/>
            <person name="Doolittle W.F."/>
            <person name="Ragan M.A."/>
            <person name="Charlebois R.L."/>
        </authorList>
    </citation>
    <scope>NUCLEOTIDE SEQUENCE [GENOMIC DNA]</scope>
    <source>
        <strain>ATCC 35092 / DSM 1617 / JCM 11322 / P2</strain>
    </source>
</reference>
<reference key="2">
    <citation type="journal article" date="2001" name="Proc. Natl. Acad. Sci. U.S.A.">
        <title>The complete genome of the crenarchaeon Sulfolobus solfataricus P2.</title>
        <authorList>
            <person name="She Q."/>
            <person name="Singh R.K."/>
            <person name="Confalonieri F."/>
            <person name="Zivanovic Y."/>
            <person name="Allard G."/>
            <person name="Awayez M.J."/>
            <person name="Chan-Weiher C.C.-Y."/>
            <person name="Clausen I.G."/>
            <person name="Curtis B.A."/>
            <person name="De Moors A."/>
            <person name="Erauso G."/>
            <person name="Fletcher C."/>
            <person name="Gordon P.M.K."/>
            <person name="Heikamp-de Jong I."/>
            <person name="Jeffries A.C."/>
            <person name="Kozera C.J."/>
            <person name="Medina N."/>
            <person name="Peng X."/>
            <person name="Thi-Ngoc H.P."/>
            <person name="Redder P."/>
            <person name="Schenk M.E."/>
            <person name="Theriault C."/>
            <person name="Tolstrup N."/>
            <person name="Charlebois R.L."/>
            <person name="Doolittle W.F."/>
            <person name="Duguet M."/>
            <person name="Gaasterland T."/>
            <person name="Garrett R.A."/>
            <person name="Ragan M.A."/>
            <person name="Sensen C.W."/>
            <person name="Van der Oost J."/>
        </authorList>
    </citation>
    <scope>NUCLEOTIDE SEQUENCE [LARGE SCALE GENOMIC DNA]</scope>
    <source>
        <strain>ATCC 35092 / DSM 1617 / JCM 11322 / P2</strain>
    </source>
</reference>
<protein>
    <recommendedName>
        <fullName evidence="1">Small ribosomal subunit protein uS11</fullName>
    </recommendedName>
    <alternativeName>
        <fullName evidence="2">30S ribosomal protein S11</fullName>
    </alternativeName>
</protein>
<keyword id="KW-0002">3D-structure</keyword>
<keyword id="KW-1185">Reference proteome</keyword>
<keyword id="KW-0687">Ribonucleoprotein</keyword>
<keyword id="KW-0689">Ribosomal protein</keyword>
<keyword id="KW-0694">RNA-binding</keyword>
<keyword id="KW-0699">rRNA-binding</keyword>
<comment type="function">
    <text evidence="1">Located on the platform of the 30S subunit.</text>
</comment>
<comment type="subunit">
    <text evidence="1">Part of the 30S ribosomal subunit.</text>
</comment>
<comment type="similarity">
    <text evidence="1">Belongs to the universal ribosomal protein uS11 family.</text>
</comment>
<dbReference type="EMBL" id="Y08257">
    <property type="protein sequence ID" value="CAA69530.1"/>
    <property type="molecule type" value="Genomic_DNA"/>
</dbReference>
<dbReference type="EMBL" id="AE006641">
    <property type="protein sequence ID" value="AAK40434.1"/>
    <property type="molecule type" value="Genomic_DNA"/>
</dbReference>
<dbReference type="PIR" id="S75416">
    <property type="entry name" value="S75416"/>
</dbReference>
<dbReference type="RefSeq" id="WP_009988884.1">
    <property type="nucleotide sequence ID" value="NC_002754.1"/>
</dbReference>
<dbReference type="PDB" id="9FHL">
    <property type="method" value="EM"/>
    <property type="resolution" value="2.50 A"/>
    <property type="chains" value="M=1-132"/>
</dbReference>
<dbReference type="PDB" id="9FRA">
    <property type="method" value="EM"/>
    <property type="resolution" value="2.80 A"/>
    <property type="chains" value="M=1-132"/>
</dbReference>
<dbReference type="PDB" id="9FRK">
    <property type="method" value="EM"/>
    <property type="resolution" value="3.00 A"/>
    <property type="chains" value="M=1-132"/>
</dbReference>
<dbReference type="PDB" id="9FRL">
    <property type="method" value="EM"/>
    <property type="resolution" value="2.97 A"/>
    <property type="chains" value="M=1-132"/>
</dbReference>
<dbReference type="PDB" id="9FS6">
    <property type="method" value="EM"/>
    <property type="resolution" value="2.90 A"/>
    <property type="chains" value="M=1-132"/>
</dbReference>
<dbReference type="PDB" id="9FS8">
    <property type="method" value="EM"/>
    <property type="resolution" value="3.70 A"/>
    <property type="chains" value="M=1-132"/>
</dbReference>
<dbReference type="PDB" id="9FSF">
    <property type="method" value="EM"/>
    <property type="resolution" value="2.80 A"/>
    <property type="chains" value="M=1-132"/>
</dbReference>
<dbReference type="PDB" id="9FY0">
    <property type="method" value="EM"/>
    <property type="resolution" value="2.90 A"/>
    <property type="chains" value="M=1-132"/>
</dbReference>
<dbReference type="PDBsum" id="9FHL"/>
<dbReference type="PDBsum" id="9FRA"/>
<dbReference type="PDBsum" id="9FRK"/>
<dbReference type="PDBsum" id="9FRL"/>
<dbReference type="PDBsum" id="9FS6"/>
<dbReference type="PDBsum" id="9FS8"/>
<dbReference type="PDBsum" id="9FSF"/>
<dbReference type="PDBsum" id="9FY0"/>
<dbReference type="EMDB" id="EMD-50445"/>
<dbReference type="EMDB" id="EMD-50709"/>
<dbReference type="EMDB" id="EMD-50716"/>
<dbReference type="EMDB" id="EMD-50717"/>
<dbReference type="EMDB" id="EMD-50724"/>
<dbReference type="EMDB" id="EMD-50725"/>
<dbReference type="EMDB" id="EMD-50727"/>
<dbReference type="EMDB" id="EMD-50854"/>
<dbReference type="SMR" id="P95988"/>
<dbReference type="FunCoup" id="P95988">
    <property type="interactions" value="225"/>
</dbReference>
<dbReference type="STRING" id="273057.SSO0072"/>
<dbReference type="PaxDb" id="273057-SSO0072"/>
<dbReference type="EnsemblBacteria" id="AAK40434">
    <property type="protein sequence ID" value="AAK40434"/>
    <property type="gene ID" value="SSO0072"/>
</dbReference>
<dbReference type="KEGG" id="sso:SSO0072"/>
<dbReference type="PATRIC" id="fig|273057.12.peg.73"/>
<dbReference type="eggNOG" id="arCOG04240">
    <property type="taxonomic scope" value="Archaea"/>
</dbReference>
<dbReference type="HOGENOM" id="CLU_072439_6_1_2"/>
<dbReference type="InParanoid" id="P95988"/>
<dbReference type="PhylomeDB" id="P95988"/>
<dbReference type="Proteomes" id="UP000001974">
    <property type="component" value="Chromosome"/>
</dbReference>
<dbReference type="GO" id="GO:0022627">
    <property type="term" value="C:cytosolic small ribosomal subunit"/>
    <property type="evidence" value="ECO:0000318"/>
    <property type="project" value="GO_Central"/>
</dbReference>
<dbReference type="GO" id="GO:0019843">
    <property type="term" value="F:rRNA binding"/>
    <property type="evidence" value="ECO:0007669"/>
    <property type="project" value="UniProtKB-UniRule"/>
</dbReference>
<dbReference type="GO" id="GO:0003735">
    <property type="term" value="F:structural constituent of ribosome"/>
    <property type="evidence" value="ECO:0000318"/>
    <property type="project" value="GO_Central"/>
</dbReference>
<dbReference type="GO" id="GO:0006412">
    <property type="term" value="P:translation"/>
    <property type="evidence" value="ECO:0000318"/>
    <property type="project" value="GO_Central"/>
</dbReference>
<dbReference type="FunFam" id="3.30.420.80:FF:000007">
    <property type="entry name" value="30S ribosomal protein S11"/>
    <property type="match status" value="1"/>
</dbReference>
<dbReference type="Gene3D" id="3.30.420.80">
    <property type="entry name" value="Ribosomal protein S11"/>
    <property type="match status" value="1"/>
</dbReference>
<dbReference type="HAMAP" id="MF_01310">
    <property type="entry name" value="Ribosomal_uS11"/>
    <property type="match status" value="1"/>
</dbReference>
<dbReference type="InterPro" id="IPR001971">
    <property type="entry name" value="Ribosomal_uS11"/>
</dbReference>
<dbReference type="InterPro" id="IPR019961">
    <property type="entry name" value="Ribosomal_uS11_archaeal"/>
</dbReference>
<dbReference type="InterPro" id="IPR018102">
    <property type="entry name" value="Ribosomal_uS11_CS"/>
</dbReference>
<dbReference type="InterPro" id="IPR036967">
    <property type="entry name" value="Ribosomal_uS11_sf"/>
</dbReference>
<dbReference type="NCBIfam" id="TIGR03628">
    <property type="entry name" value="arch_S11P"/>
    <property type="match status" value="1"/>
</dbReference>
<dbReference type="NCBIfam" id="NF007176">
    <property type="entry name" value="PRK09607.1"/>
    <property type="match status" value="1"/>
</dbReference>
<dbReference type="PANTHER" id="PTHR11759">
    <property type="entry name" value="40S RIBOSOMAL PROTEIN S14/30S RIBOSOMAL PROTEIN S11"/>
    <property type="match status" value="1"/>
</dbReference>
<dbReference type="Pfam" id="PF00411">
    <property type="entry name" value="Ribosomal_S11"/>
    <property type="match status" value="1"/>
</dbReference>
<dbReference type="PIRSF" id="PIRSF002131">
    <property type="entry name" value="Ribosomal_S11"/>
    <property type="match status" value="1"/>
</dbReference>
<dbReference type="SUPFAM" id="SSF53137">
    <property type="entry name" value="Translational machinery components"/>
    <property type="match status" value="1"/>
</dbReference>
<dbReference type="PROSITE" id="PS00054">
    <property type="entry name" value="RIBOSOMAL_S11"/>
    <property type="match status" value="1"/>
</dbReference>
<name>RS11_SACS2</name>
<proteinExistence type="evidence at protein level"/>